<name>GLNR_BACCR</name>
<evidence type="ECO:0000250" key="1">
    <source>
        <dbReference type="UniProtKB" id="P37582"/>
    </source>
</evidence>
<evidence type="ECO:0000255" key="2">
    <source>
        <dbReference type="PROSITE-ProRule" id="PRU00254"/>
    </source>
</evidence>
<keyword id="KW-0238">DNA-binding</keyword>
<keyword id="KW-1185">Reference proteome</keyword>
<keyword id="KW-0678">Repressor</keyword>
<keyword id="KW-0804">Transcription</keyword>
<keyword id="KW-0805">Transcription regulation</keyword>
<gene>
    <name evidence="1" type="primary">glnR</name>
    <name type="ordered locus">BC_3706</name>
</gene>
<reference key="1">
    <citation type="journal article" date="2003" name="Nature">
        <title>Genome sequence of Bacillus cereus and comparative analysis with Bacillus anthracis.</title>
        <authorList>
            <person name="Ivanova N."/>
            <person name="Sorokin A."/>
            <person name="Anderson I."/>
            <person name="Galleron N."/>
            <person name="Candelon B."/>
            <person name="Kapatral V."/>
            <person name="Bhattacharyya A."/>
            <person name="Reznik G."/>
            <person name="Mikhailova N."/>
            <person name="Lapidus A."/>
            <person name="Chu L."/>
            <person name="Mazur M."/>
            <person name="Goltsman E."/>
            <person name="Larsen N."/>
            <person name="D'Souza M."/>
            <person name="Walunas T."/>
            <person name="Grechkin Y."/>
            <person name="Pusch G."/>
            <person name="Haselkorn R."/>
            <person name="Fonstein M."/>
            <person name="Ehrlich S.D."/>
            <person name="Overbeek R."/>
            <person name="Kyrpides N.C."/>
        </authorList>
    </citation>
    <scope>NUCLEOTIDE SEQUENCE [LARGE SCALE GENOMIC DNA]</scope>
    <source>
        <strain>ATCC 14579 / DSM 31 / CCUG 7414 / JCM 2152 / NBRC 15305 / NCIMB 9373 / NCTC 2599 / NRRL B-3711</strain>
    </source>
</reference>
<feature type="chain" id="PRO_0000098121" description="HTH-type transcriptional regulator GlnR">
    <location>
        <begin position="1"/>
        <end position="129"/>
    </location>
</feature>
<feature type="domain" description="HTH merR-type" evidence="2">
    <location>
        <begin position="10"/>
        <end position="78"/>
    </location>
</feature>
<feature type="DNA-binding region" description="H-T-H motif" evidence="2">
    <location>
        <begin position="13"/>
        <end position="32"/>
    </location>
</feature>
<sequence length="129" mass="15173">MKEDRRSAPLFPIGIVMDLTQLSARQIRYYEEHNLVSPTRTKGNRRLFSFNDVDKLLEIKDLLDQGLNMAGIKQVLLMKENQTEAVKVKEETKEISKTELRKILRDELQHTGRFNRTSLRQGDISRFFH</sequence>
<accession>P62174</accession>
<accession>P19083</accession>
<dbReference type="EMBL" id="AE016877">
    <property type="protein sequence ID" value="AAP10634.1"/>
    <property type="molecule type" value="Genomic_DNA"/>
</dbReference>
<dbReference type="RefSeq" id="NP_833433.1">
    <property type="nucleotide sequence ID" value="NC_004722.1"/>
</dbReference>
<dbReference type="RefSeq" id="WP_000656783.1">
    <property type="nucleotide sequence ID" value="NZ_CP138336.1"/>
</dbReference>
<dbReference type="SMR" id="P62174"/>
<dbReference type="STRING" id="226900.BC_3706"/>
<dbReference type="GeneID" id="87591128"/>
<dbReference type="KEGG" id="bce:BC3706"/>
<dbReference type="PATRIC" id="fig|226900.8.peg.3815"/>
<dbReference type="HOGENOM" id="CLU_060077_9_0_9"/>
<dbReference type="OrthoDB" id="9806513at2"/>
<dbReference type="PRO" id="PR:P62174"/>
<dbReference type="Proteomes" id="UP000001417">
    <property type="component" value="Chromosome"/>
</dbReference>
<dbReference type="GO" id="GO:0003677">
    <property type="term" value="F:DNA binding"/>
    <property type="evidence" value="ECO:0007669"/>
    <property type="project" value="UniProtKB-KW"/>
</dbReference>
<dbReference type="GO" id="GO:0003700">
    <property type="term" value="F:DNA-binding transcription factor activity"/>
    <property type="evidence" value="ECO:0000318"/>
    <property type="project" value="GO_Central"/>
</dbReference>
<dbReference type="GO" id="GO:0045892">
    <property type="term" value="P:negative regulation of DNA-templated transcription"/>
    <property type="evidence" value="ECO:0000318"/>
    <property type="project" value="GO_Central"/>
</dbReference>
<dbReference type="CDD" id="cd01105">
    <property type="entry name" value="HTH_GlnR-like"/>
    <property type="match status" value="1"/>
</dbReference>
<dbReference type="FunFam" id="1.10.1660.10:FF:000005">
    <property type="entry name" value="MerR family transcriptional regulator"/>
    <property type="match status" value="1"/>
</dbReference>
<dbReference type="Gene3D" id="1.10.1660.10">
    <property type="match status" value="1"/>
</dbReference>
<dbReference type="InterPro" id="IPR009061">
    <property type="entry name" value="DNA-bd_dom_put_sf"/>
</dbReference>
<dbReference type="InterPro" id="IPR000551">
    <property type="entry name" value="MerR-type_HTH_dom"/>
</dbReference>
<dbReference type="InterPro" id="IPR047057">
    <property type="entry name" value="MerR_fam"/>
</dbReference>
<dbReference type="PANTHER" id="PTHR30204:SF65">
    <property type="entry name" value="HTH-TYPE TRANSCRIPTIONAL REGULATOR TNRA"/>
    <property type="match status" value="1"/>
</dbReference>
<dbReference type="PANTHER" id="PTHR30204">
    <property type="entry name" value="REDOX-CYCLING DRUG-SENSING TRANSCRIPTIONAL ACTIVATOR SOXR"/>
    <property type="match status" value="1"/>
</dbReference>
<dbReference type="Pfam" id="PF13411">
    <property type="entry name" value="MerR_1"/>
    <property type="match status" value="1"/>
</dbReference>
<dbReference type="SMART" id="SM00422">
    <property type="entry name" value="HTH_MERR"/>
    <property type="match status" value="1"/>
</dbReference>
<dbReference type="SUPFAM" id="SSF46955">
    <property type="entry name" value="Putative DNA-binding domain"/>
    <property type="match status" value="1"/>
</dbReference>
<dbReference type="PROSITE" id="PS00552">
    <property type="entry name" value="HTH_MERR_1"/>
    <property type="match status" value="1"/>
</dbReference>
<dbReference type="PROSITE" id="PS50937">
    <property type="entry name" value="HTH_MERR_2"/>
    <property type="match status" value="1"/>
</dbReference>
<proteinExistence type="inferred from homology"/>
<organism>
    <name type="scientific">Bacillus cereus (strain ATCC 14579 / DSM 31 / CCUG 7414 / JCM 2152 / NBRC 15305 / NCIMB 9373 / NCTC 2599 / NRRL B-3711)</name>
    <dbReference type="NCBI Taxonomy" id="226900"/>
    <lineage>
        <taxon>Bacteria</taxon>
        <taxon>Bacillati</taxon>
        <taxon>Bacillota</taxon>
        <taxon>Bacilli</taxon>
        <taxon>Bacillales</taxon>
        <taxon>Bacillaceae</taxon>
        <taxon>Bacillus</taxon>
        <taxon>Bacillus cereus group</taxon>
    </lineage>
</organism>
<comment type="function">
    <text evidence="1">Transcription repressor during nitrogen excess. On the contrary of the MerR members, which require longer DNA sites for high-affinity binding, GlnR requires a DNA sequence of 17 nucleotides as minimal binding site.</text>
</comment>
<comment type="activity regulation">
    <text evidence="1">Under conditions of nitrogen excess, the DNA binding activity of GlnR is activated by a transient interaction with feedback-inhibited GlnA. Under conditions of nitrogen-limited, GlnR is autoinhibited by its C-terminal region.</text>
</comment>
<comment type="subunit">
    <text evidence="1">Homodimer under conditions of nitrogen excess. Monomer under conditions of nitrogen-limited. Interacts with feedback-inhibited GlnA in order to stabilizes GlnR-DNA complex.</text>
</comment>
<comment type="induction">
    <text evidence="1">Under conditions of nitrogen-limited growth, repressed by TnrA.</text>
</comment>
<comment type="miscellaneous">
    <text evidence="1">The amino acid sequences of the N-terminal DNA binding domains of TnrA and GlnR are highly similar, and both proteins bind to DNA sequences with a common consensus sequence. In contrast, the C-terminal signal transduction domains of TnrA and GlnR have no homology.</text>
</comment>
<protein>
    <recommendedName>
        <fullName evidence="1">HTH-type transcriptional regulator GlnR</fullName>
    </recommendedName>
</protein>